<reference key="1">
    <citation type="journal article" date="1989" name="Proc. Natl. Acad. Sci. U.S.A.">
        <title>Cadmium resistance from Staphylococcus aureus plasmid pI258 cadA gene results from a cadmium-efflux ATPase.</title>
        <authorList>
            <person name="Nucifora G."/>
            <person name="Chu L."/>
            <person name="Misra T.K."/>
            <person name="Silver S."/>
        </authorList>
    </citation>
    <scope>NUCLEOTIDE SEQUENCE [GENOMIC DNA]</scope>
    <scope>FUNCTION</scope>
    <source>
        <strain>BD224</strain>
    </source>
</reference>
<reference key="2">
    <citation type="journal article" date="1992" name="J. Bacteriol.">
        <title>ATP-dependent cadmium transport by the cadA cadmium resistance determinant in everted membrane vesicles of Bacillus subtilis.</title>
        <authorList>
            <person name="Tsai K.J."/>
            <person name="Yoon K.P."/>
            <person name="Lynn A.R."/>
        </authorList>
    </citation>
    <scope>FUNCTION</scope>
    <scope>CATALYTIC ACTIVITY</scope>
    <scope>ACTIVITY REGULATION</scope>
    <scope>SUBCELLULAR LOCATION</scope>
    <scope>INDUCTION</scope>
</reference>
<proteinExistence type="evidence at protein level"/>
<accession>P20021</accession>
<evidence type="ECO:0000255" key="1"/>
<evidence type="ECO:0000255" key="2">
    <source>
        <dbReference type="PROSITE-ProRule" id="PRU00280"/>
    </source>
</evidence>
<evidence type="ECO:0000269" key="3">
    <source>
    </source>
</evidence>
<evidence type="ECO:0000269" key="4">
    <source>
    </source>
</evidence>
<evidence type="ECO:0000303" key="5">
    <source>
    </source>
</evidence>
<evidence type="ECO:0000303" key="6">
    <source>
    </source>
</evidence>
<evidence type="ECO:0000305" key="7"/>
<sequence>MSEQKVKLMEEEMNVYRVQGFTCANCAGKFEKNVKKIPGVQDAKVNFGASKIDVYGNASVEELEKAGAFENLKVSPEKLANQTIQRVKDDTKAHKEEKTPFYKKHSTLLFATLLIAFGYLSHFVNGEDNLVTSMLFVGSIVIGGYSLFKVGFQNLIRFDFDMKTLMTVAVIGATIIGKWAEASIVVILFAISEALERFSMDRSRQSIRSLMDIAPKEALVRRNGQEIIIHVDDIAVGDIMIVKPGEKIAMDGIIVNGLSAVNQAAITGESVPVSKAVDDEVFAGTLNEEGLIEVKITKYVEDTTITKIIHLVEEAQGERAPAQAFVDKFAKYYTPIIMVIAALVAVVPPLFFGGSWDTWVYQGLAVLVVGCPCALVISTPISIVSAIGNAAKKGVLVKGGVYLEKLGAIKTVAFDKTGTLTKGVPVVTDFEVLNDQVEEKELFSIITALEYRSQHPLASAIMKKAEQDNIPYSNVQVEEFTSITGRGIKGIVNGTTYYIGSPKLFKELNVSDFSLGFENNVKILQNQGKTAMIIGTEKTILGVIAVADEVRETSKNVIQKLHQLGIKQTIMLTGDNQGTANAIGTHVGVSDIQSELMPQDKLDYIKKMQSEYDNVAMIGDGVNDAPALAASTVGIAMGGAGTDTAIETADIALMGDDLSKLPFAVRLSRKTLNIIKANITFAIGIKIIALLLVIPGWLTLWIAILSDMGATILVALNSLRLMRVKDK</sequence>
<dbReference type="EC" id="7.2.2.21" evidence="3"/>
<dbReference type="EMBL" id="J04551">
    <property type="protein sequence ID" value="AAB59154.1"/>
    <property type="molecule type" value="Genomic_DNA"/>
</dbReference>
<dbReference type="PIR" id="A32561">
    <property type="entry name" value="A32561"/>
</dbReference>
<dbReference type="RefSeq" id="WP_000003267.1">
    <property type="nucleotide sequence ID" value="NZ_UHCF01000003.1"/>
</dbReference>
<dbReference type="RefSeq" id="YP_006937600.1">
    <property type="nucleotide sequence ID" value="NC_013319.1"/>
</dbReference>
<dbReference type="RefSeq" id="YP_006938635.1">
    <property type="nucleotide sequence ID" value="NC_013347.1"/>
</dbReference>
<dbReference type="RefSeq" id="YP_006938768.1">
    <property type="nucleotide sequence ID" value="NC_013352.1"/>
</dbReference>
<dbReference type="SMR" id="P20021"/>
<dbReference type="TCDB" id="3.A.3.6.1">
    <property type="family name" value="the p-type atpase (p-atpase) superfamily"/>
</dbReference>
<dbReference type="GO" id="GO:0005886">
    <property type="term" value="C:plasma membrane"/>
    <property type="evidence" value="ECO:0007669"/>
    <property type="project" value="UniProtKB-SubCell"/>
</dbReference>
<dbReference type="GO" id="GO:0005524">
    <property type="term" value="F:ATP binding"/>
    <property type="evidence" value="ECO:0007669"/>
    <property type="project" value="UniProtKB-KW"/>
</dbReference>
<dbReference type="GO" id="GO:0016887">
    <property type="term" value="F:ATP hydrolysis activity"/>
    <property type="evidence" value="ECO:0007669"/>
    <property type="project" value="InterPro"/>
</dbReference>
<dbReference type="GO" id="GO:0046872">
    <property type="term" value="F:metal ion binding"/>
    <property type="evidence" value="ECO:0007669"/>
    <property type="project" value="UniProtKB-KW"/>
</dbReference>
<dbReference type="GO" id="GO:0008551">
    <property type="term" value="F:P-type cadmium transporter activity"/>
    <property type="evidence" value="ECO:0007669"/>
    <property type="project" value="UniProtKB-EC"/>
</dbReference>
<dbReference type="GO" id="GO:0046686">
    <property type="term" value="P:response to cadmium ion"/>
    <property type="evidence" value="ECO:0007669"/>
    <property type="project" value="UniProtKB-KW"/>
</dbReference>
<dbReference type="CDD" id="cd00371">
    <property type="entry name" value="HMA"/>
    <property type="match status" value="1"/>
</dbReference>
<dbReference type="CDD" id="cd07545">
    <property type="entry name" value="P-type_ATPase_Cd-like"/>
    <property type="match status" value="1"/>
</dbReference>
<dbReference type="FunFam" id="2.70.150.10:FF:000002">
    <property type="entry name" value="Copper-transporting ATPase 1, putative"/>
    <property type="match status" value="1"/>
</dbReference>
<dbReference type="Gene3D" id="3.30.70.100">
    <property type="match status" value="1"/>
</dbReference>
<dbReference type="Gene3D" id="3.40.1110.10">
    <property type="entry name" value="Calcium-transporting ATPase, cytoplasmic domain N"/>
    <property type="match status" value="1"/>
</dbReference>
<dbReference type="Gene3D" id="2.70.150.10">
    <property type="entry name" value="Calcium-transporting ATPase, cytoplasmic transduction domain A"/>
    <property type="match status" value="1"/>
</dbReference>
<dbReference type="Gene3D" id="3.40.50.1000">
    <property type="entry name" value="HAD superfamily/HAD-like"/>
    <property type="match status" value="1"/>
</dbReference>
<dbReference type="InterPro" id="IPR023299">
    <property type="entry name" value="ATPase_P-typ_cyto_dom_N"/>
</dbReference>
<dbReference type="InterPro" id="IPR018303">
    <property type="entry name" value="ATPase_P-typ_P_site"/>
</dbReference>
<dbReference type="InterPro" id="IPR023298">
    <property type="entry name" value="ATPase_P-typ_TM_dom_sf"/>
</dbReference>
<dbReference type="InterPro" id="IPR008250">
    <property type="entry name" value="ATPase_P-typ_transduc_dom_A_sf"/>
</dbReference>
<dbReference type="InterPro" id="IPR051014">
    <property type="entry name" value="Cation_Transport_ATPase_IB"/>
</dbReference>
<dbReference type="InterPro" id="IPR036412">
    <property type="entry name" value="HAD-like_sf"/>
</dbReference>
<dbReference type="InterPro" id="IPR023214">
    <property type="entry name" value="HAD_sf"/>
</dbReference>
<dbReference type="InterPro" id="IPR017969">
    <property type="entry name" value="Heavy-metal-associated_CS"/>
</dbReference>
<dbReference type="InterPro" id="IPR006121">
    <property type="entry name" value="HMA_dom"/>
</dbReference>
<dbReference type="InterPro" id="IPR036163">
    <property type="entry name" value="HMA_dom_sf"/>
</dbReference>
<dbReference type="InterPro" id="IPR027256">
    <property type="entry name" value="P-typ_ATPase_IB"/>
</dbReference>
<dbReference type="InterPro" id="IPR001757">
    <property type="entry name" value="P_typ_ATPase"/>
</dbReference>
<dbReference type="InterPro" id="IPR044492">
    <property type="entry name" value="P_typ_ATPase_HD_dom"/>
</dbReference>
<dbReference type="NCBIfam" id="TIGR01511">
    <property type="entry name" value="ATPase-IB1_Cu"/>
    <property type="match status" value="1"/>
</dbReference>
<dbReference type="NCBIfam" id="TIGR01512">
    <property type="entry name" value="ATPase-IB2_Cd"/>
    <property type="match status" value="1"/>
</dbReference>
<dbReference type="NCBIfam" id="TIGR01525">
    <property type="entry name" value="ATPase-IB_hvy"/>
    <property type="match status" value="1"/>
</dbReference>
<dbReference type="NCBIfam" id="TIGR01494">
    <property type="entry name" value="ATPase_P-type"/>
    <property type="match status" value="1"/>
</dbReference>
<dbReference type="PANTHER" id="PTHR48085">
    <property type="entry name" value="CADMIUM/ZINC-TRANSPORTING ATPASE HMA2-RELATED"/>
    <property type="match status" value="1"/>
</dbReference>
<dbReference type="PANTHER" id="PTHR48085:SF5">
    <property type="entry name" value="CADMIUM_ZINC-TRANSPORTING ATPASE HMA4-RELATED"/>
    <property type="match status" value="1"/>
</dbReference>
<dbReference type="Pfam" id="PF00122">
    <property type="entry name" value="E1-E2_ATPase"/>
    <property type="match status" value="1"/>
</dbReference>
<dbReference type="Pfam" id="PF00403">
    <property type="entry name" value="HMA"/>
    <property type="match status" value="1"/>
</dbReference>
<dbReference type="Pfam" id="PF00702">
    <property type="entry name" value="Hydrolase"/>
    <property type="match status" value="1"/>
</dbReference>
<dbReference type="PRINTS" id="PR00119">
    <property type="entry name" value="CATATPASE"/>
</dbReference>
<dbReference type="PRINTS" id="PR00941">
    <property type="entry name" value="CDATPASE"/>
</dbReference>
<dbReference type="SFLD" id="SFLDG00002">
    <property type="entry name" value="C1.7:_P-type_atpase_like"/>
    <property type="match status" value="1"/>
</dbReference>
<dbReference type="SFLD" id="SFLDF00027">
    <property type="entry name" value="p-type_atpase"/>
    <property type="match status" value="1"/>
</dbReference>
<dbReference type="SUPFAM" id="SSF81653">
    <property type="entry name" value="Calcium ATPase, transduction domain A"/>
    <property type="match status" value="1"/>
</dbReference>
<dbReference type="SUPFAM" id="SSF81665">
    <property type="entry name" value="Calcium ATPase, transmembrane domain M"/>
    <property type="match status" value="1"/>
</dbReference>
<dbReference type="SUPFAM" id="SSF56784">
    <property type="entry name" value="HAD-like"/>
    <property type="match status" value="1"/>
</dbReference>
<dbReference type="SUPFAM" id="SSF55008">
    <property type="entry name" value="HMA, heavy metal-associated domain"/>
    <property type="match status" value="1"/>
</dbReference>
<dbReference type="PROSITE" id="PS00154">
    <property type="entry name" value="ATPASE_E1_E2"/>
    <property type="match status" value="1"/>
</dbReference>
<dbReference type="PROSITE" id="PS01047">
    <property type="entry name" value="HMA_1"/>
    <property type="match status" value="1"/>
</dbReference>
<dbReference type="PROSITE" id="PS50846">
    <property type="entry name" value="HMA_2"/>
    <property type="match status" value="1"/>
</dbReference>
<comment type="function">
    <text evidence="3 4">Couples the hydrolysis of ATP with the export of cadmium (PubMed:1530844). Involved in cadmium resistance (PubMed:1530844, PubMed:2524829).</text>
</comment>
<comment type="catalytic activity">
    <reaction evidence="3">
        <text>Cd(2+)(in) + ATP + H2O = Cd(2+)(out) + ADP + phosphate + H(+)</text>
        <dbReference type="Rhea" id="RHEA:12132"/>
        <dbReference type="ChEBI" id="CHEBI:15377"/>
        <dbReference type="ChEBI" id="CHEBI:15378"/>
        <dbReference type="ChEBI" id="CHEBI:30616"/>
        <dbReference type="ChEBI" id="CHEBI:43474"/>
        <dbReference type="ChEBI" id="CHEBI:48775"/>
        <dbReference type="ChEBI" id="CHEBI:456216"/>
        <dbReference type="EC" id="7.2.2.21"/>
    </reaction>
</comment>
<comment type="activity regulation">
    <text evidence="3">Inhibited by the antibiotic bafilomycin A1. Partially inhibited by DCCD, nigericin and FCCP.</text>
</comment>
<comment type="subcellular location">
    <subcellularLocation>
        <location evidence="3">Cell membrane</location>
        <topology evidence="1">Multi-pass membrane protein</topology>
    </subcellularLocation>
</comment>
<comment type="induction">
    <text evidence="3">By cadmium.</text>
</comment>
<comment type="similarity">
    <text evidence="7">Belongs to the cation transport ATPase (P-type) (TC 3.A.3) family. Type IB subfamily.</text>
</comment>
<name>CADA1_STAAU</name>
<geneLocation type="plasmid">
    <name>pI258</name>
</geneLocation>
<keyword id="KW-0067">ATP-binding</keyword>
<keyword id="KW-0104">Cadmium</keyword>
<keyword id="KW-0105">Cadmium resistance</keyword>
<keyword id="KW-1003">Cell membrane</keyword>
<keyword id="KW-0406">Ion transport</keyword>
<keyword id="KW-0460">Magnesium</keyword>
<keyword id="KW-0472">Membrane</keyword>
<keyword id="KW-0479">Metal-binding</keyword>
<keyword id="KW-0547">Nucleotide-binding</keyword>
<keyword id="KW-0597">Phosphoprotein</keyword>
<keyword id="KW-0614">Plasmid</keyword>
<keyword id="KW-1278">Translocase</keyword>
<keyword id="KW-0812">Transmembrane</keyword>
<keyword id="KW-1133">Transmembrane helix</keyword>
<keyword id="KW-0813">Transport</keyword>
<protein>
    <recommendedName>
        <fullName evidence="5">Cadmium-transporting ATPase</fullName>
        <ecNumber evidence="3">7.2.2.21</ecNumber>
    </recommendedName>
    <alternativeName>
        <fullName evidence="6">Cadmium-efflux ATPase</fullName>
    </alternativeName>
</protein>
<organism>
    <name type="scientific">Staphylococcus aureus</name>
    <dbReference type="NCBI Taxonomy" id="1280"/>
    <lineage>
        <taxon>Bacteria</taxon>
        <taxon>Bacillati</taxon>
        <taxon>Bacillota</taxon>
        <taxon>Bacilli</taxon>
        <taxon>Bacillales</taxon>
        <taxon>Staphylococcaceae</taxon>
        <taxon>Staphylococcus</taxon>
    </lineage>
</organism>
<feature type="chain" id="PRO_0000046248" description="Cadmium-transporting ATPase">
    <location>
        <begin position="1"/>
        <end position="727"/>
    </location>
</feature>
<feature type="transmembrane region" description="Helical" evidence="1">
    <location>
        <begin position="106"/>
        <end position="126"/>
    </location>
</feature>
<feature type="transmembrane region" description="Helical" evidence="1">
    <location>
        <begin position="130"/>
        <end position="150"/>
    </location>
</feature>
<feature type="transmembrane region" description="Helical" evidence="1">
    <location>
        <begin position="171"/>
        <end position="191"/>
    </location>
</feature>
<feature type="transmembrane region" description="Helical" evidence="1">
    <location>
        <begin position="336"/>
        <end position="356"/>
    </location>
</feature>
<feature type="transmembrane region" description="Helical" evidence="1">
    <location>
        <begin position="364"/>
        <end position="384"/>
    </location>
</feature>
<feature type="transmembrane region" description="Helical" evidence="1">
    <location>
        <begin position="672"/>
        <end position="694"/>
    </location>
</feature>
<feature type="transmembrane region" description="Helical" evidence="1">
    <location>
        <begin position="699"/>
        <end position="721"/>
    </location>
</feature>
<feature type="domain" description="HMA" evidence="2">
    <location>
        <begin position="12"/>
        <end position="75"/>
    </location>
</feature>
<feature type="active site" description="4-aspartylphosphate intermediate" evidence="7">
    <location>
        <position position="415"/>
    </location>
</feature>
<feature type="binding site" evidence="2 7">
    <location>
        <position position="23"/>
    </location>
    <ligand>
        <name>Cd(2+)</name>
        <dbReference type="ChEBI" id="CHEBI:48775"/>
    </ligand>
</feature>
<feature type="binding site" evidence="2 7">
    <location>
        <position position="26"/>
    </location>
    <ligand>
        <name>Cd(2+)</name>
        <dbReference type="ChEBI" id="CHEBI:48775"/>
    </ligand>
</feature>
<gene>
    <name evidence="6" type="primary">cadA</name>
</gene>